<proteinExistence type="inferred from homology"/>
<sequence>MLAPEHRLRSSALFSTVVKKGARKGSRTLVVHLWTPEPGPDAPLELTGGPRAGLIVSKAVGNAVVRHAVSRKLRAVLATIIDEDATAASPQLQETSFVVVRALPGSAEASSKELESDVRRCLSRLSR</sequence>
<feature type="chain" id="PRO_1000100354" description="Ribonuclease P protein component">
    <location>
        <begin position="1"/>
        <end position="127"/>
    </location>
</feature>
<evidence type="ECO:0000255" key="1">
    <source>
        <dbReference type="HAMAP-Rule" id="MF_00227"/>
    </source>
</evidence>
<keyword id="KW-0255">Endonuclease</keyword>
<keyword id="KW-0378">Hydrolase</keyword>
<keyword id="KW-0540">Nuclease</keyword>
<keyword id="KW-1185">Reference proteome</keyword>
<keyword id="KW-0694">RNA-binding</keyword>
<keyword id="KW-0819">tRNA processing</keyword>
<name>RNPA_CORU7</name>
<comment type="function">
    <text evidence="1">RNaseP catalyzes the removal of the 5'-leader sequence from pre-tRNA to produce the mature 5'-terminus. It can also cleave other RNA substrates such as 4.5S RNA. The protein component plays an auxiliary but essential role in vivo by binding to the 5'-leader sequence and broadening the substrate specificity of the ribozyme.</text>
</comment>
<comment type="catalytic activity">
    <reaction evidence="1">
        <text>Endonucleolytic cleavage of RNA, removing 5'-extranucleotides from tRNA precursor.</text>
        <dbReference type="EC" id="3.1.26.5"/>
    </reaction>
</comment>
<comment type="subunit">
    <text evidence="1">Consists of a catalytic RNA component (M1 or rnpB) and a protein subunit.</text>
</comment>
<comment type="similarity">
    <text evidence="1">Belongs to the RnpA family.</text>
</comment>
<organism>
    <name type="scientific">Corynebacterium urealyticum (strain ATCC 43042 / DSM 7109)</name>
    <dbReference type="NCBI Taxonomy" id="504474"/>
    <lineage>
        <taxon>Bacteria</taxon>
        <taxon>Bacillati</taxon>
        <taxon>Actinomycetota</taxon>
        <taxon>Actinomycetes</taxon>
        <taxon>Mycobacteriales</taxon>
        <taxon>Corynebacteriaceae</taxon>
        <taxon>Corynebacterium</taxon>
    </lineage>
</organism>
<dbReference type="EC" id="3.1.26.5" evidence="1"/>
<dbReference type="EMBL" id="AM942444">
    <property type="protein sequence ID" value="CAQ05983.1"/>
    <property type="molecule type" value="Genomic_DNA"/>
</dbReference>
<dbReference type="RefSeq" id="WP_012361250.1">
    <property type="nucleotide sequence ID" value="NC_010545.1"/>
</dbReference>
<dbReference type="SMR" id="B1VJ37"/>
<dbReference type="STRING" id="504474.cu2026"/>
<dbReference type="GeneID" id="60604801"/>
<dbReference type="KEGG" id="cur:cu2026"/>
<dbReference type="eggNOG" id="COG0594">
    <property type="taxonomic scope" value="Bacteria"/>
</dbReference>
<dbReference type="HOGENOM" id="CLU_117179_4_1_11"/>
<dbReference type="Proteomes" id="UP000001727">
    <property type="component" value="Chromosome"/>
</dbReference>
<dbReference type="GO" id="GO:0030677">
    <property type="term" value="C:ribonuclease P complex"/>
    <property type="evidence" value="ECO:0007669"/>
    <property type="project" value="TreeGrafter"/>
</dbReference>
<dbReference type="GO" id="GO:0042781">
    <property type="term" value="F:3'-tRNA processing endoribonuclease activity"/>
    <property type="evidence" value="ECO:0007669"/>
    <property type="project" value="TreeGrafter"/>
</dbReference>
<dbReference type="GO" id="GO:0004526">
    <property type="term" value="F:ribonuclease P activity"/>
    <property type="evidence" value="ECO:0007669"/>
    <property type="project" value="UniProtKB-UniRule"/>
</dbReference>
<dbReference type="GO" id="GO:0000049">
    <property type="term" value="F:tRNA binding"/>
    <property type="evidence" value="ECO:0007669"/>
    <property type="project" value="UniProtKB-UniRule"/>
</dbReference>
<dbReference type="GO" id="GO:0001682">
    <property type="term" value="P:tRNA 5'-leader removal"/>
    <property type="evidence" value="ECO:0007669"/>
    <property type="project" value="UniProtKB-UniRule"/>
</dbReference>
<dbReference type="Gene3D" id="3.30.230.10">
    <property type="match status" value="1"/>
</dbReference>
<dbReference type="HAMAP" id="MF_00227">
    <property type="entry name" value="RNase_P"/>
    <property type="match status" value="1"/>
</dbReference>
<dbReference type="InterPro" id="IPR020568">
    <property type="entry name" value="Ribosomal_Su5_D2-typ_SF"/>
</dbReference>
<dbReference type="InterPro" id="IPR014721">
    <property type="entry name" value="Ribsml_uS5_D2-typ_fold_subgr"/>
</dbReference>
<dbReference type="InterPro" id="IPR000100">
    <property type="entry name" value="RNase_P"/>
</dbReference>
<dbReference type="NCBIfam" id="TIGR00188">
    <property type="entry name" value="rnpA"/>
    <property type="match status" value="1"/>
</dbReference>
<dbReference type="PANTHER" id="PTHR33992">
    <property type="entry name" value="RIBONUCLEASE P PROTEIN COMPONENT"/>
    <property type="match status" value="1"/>
</dbReference>
<dbReference type="PANTHER" id="PTHR33992:SF1">
    <property type="entry name" value="RIBONUCLEASE P PROTEIN COMPONENT"/>
    <property type="match status" value="1"/>
</dbReference>
<dbReference type="Pfam" id="PF00825">
    <property type="entry name" value="Ribonuclease_P"/>
    <property type="match status" value="1"/>
</dbReference>
<dbReference type="SUPFAM" id="SSF54211">
    <property type="entry name" value="Ribosomal protein S5 domain 2-like"/>
    <property type="match status" value="1"/>
</dbReference>
<accession>B1VJ37</accession>
<reference key="1">
    <citation type="journal article" date="2008" name="J. Biotechnol.">
        <title>The lifestyle of Corynebacterium urealyticum derived from its complete genome sequence established by pyrosequencing.</title>
        <authorList>
            <person name="Tauch A."/>
            <person name="Trost E."/>
            <person name="Tilker A."/>
            <person name="Ludewig U."/>
            <person name="Schneiker S."/>
            <person name="Goesmann A."/>
            <person name="Arnold W."/>
            <person name="Bekel T."/>
            <person name="Brinkrolf K."/>
            <person name="Brune I."/>
            <person name="Goetker S."/>
            <person name="Kalinowski J."/>
            <person name="Kamp P.-B."/>
            <person name="Lobo F.P."/>
            <person name="Viehoever P."/>
            <person name="Weisshaar B."/>
            <person name="Soriano F."/>
            <person name="Droege M."/>
            <person name="Puehler A."/>
        </authorList>
    </citation>
    <scope>NUCLEOTIDE SEQUENCE [LARGE SCALE GENOMIC DNA]</scope>
    <source>
        <strain>ATCC 43042 / DSM 7109</strain>
    </source>
</reference>
<protein>
    <recommendedName>
        <fullName evidence="1">Ribonuclease P protein component</fullName>
        <shortName evidence="1">RNase P protein</shortName>
        <shortName evidence="1">RNaseP protein</shortName>
        <ecNumber evidence="1">3.1.26.5</ecNumber>
    </recommendedName>
    <alternativeName>
        <fullName evidence="1">Protein C5</fullName>
    </alternativeName>
</protein>
<gene>
    <name evidence="1" type="primary">rnpA</name>
    <name type="ordered locus">cu2026</name>
</gene>